<evidence type="ECO:0000305" key="1"/>
<comment type="sequence caution" evidence="1">
    <conflict type="erroneous gene model prediction">
        <sequence resource="EMBL-CDS" id="CAB88310"/>
    </conflict>
</comment>
<organism>
    <name type="scientific">Arabidopsis thaliana</name>
    <name type="common">Mouse-ear cress</name>
    <dbReference type="NCBI Taxonomy" id="3702"/>
    <lineage>
        <taxon>Eukaryota</taxon>
        <taxon>Viridiplantae</taxon>
        <taxon>Streptophyta</taxon>
        <taxon>Embryophyta</taxon>
        <taxon>Tracheophyta</taxon>
        <taxon>Spermatophyta</taxon>
        <taxon>Magnoliopsida</taxon>
        <taxon>eudicotyledons</taxon>
        <taxon>Gunneridae</taxon>
        <taxon>Pentapetalae</taxon>
        <taxon>rosids</taxon>
        <taxon>malvids</taxon>
        <taxon>Brassicales</taxon>
        <taxon>Brassicaceae</taxon>
        <taxon>Camelineae</taxon>
        <taxon>Arabidopsis</taxon>
    </lineage>
</organism>
<dbReference type="EMBL" id="AL353032">
    <property type="protein sequence ID" value="CAB88310.1"/>
    <property type="status" value="ALT_SEQ"/>
    <property type="molecule type" value="Genomic_DNA"/>
</dbReference>
<dbReference type="EMBL" id="CP002686">
    <property type="protein sequence ID" value="AEE79851.1"/>
    <property type="molecule type" value="Genomic_DNA"/>
</dbReference>
<dbReference type="EMBL" id="CP002686">
    <property type="protein sequence ID" value="ANM64157.1"/>
    <property type="molecule type" value="Genomic_DNA"/>
</dbReference>
<dbReference type="EMBL" id="CP002686">
    <property type="protein sequence ID" value="ANM64158.1"/>
    <property type="molecule type" value="Genomic_DNA"/>
</dbReference>
<dbReference type="EMBL" id="AK117999">
    <property type="protein sequence ID" value="BAC42633.1"/>
    <property type="molecule type" value="mRNA"/>
</dbReference>
<dbReference type="EMBL" id="BT005389">
    <property type="protein sequence ID" value="AAO63453.1"/>
    <property type="molecule type" value="mRNA"/>
</dbReference>
<dbReference type="PIR" id="T49176">
    <property type="entry name" value="T49176"/>
</dbReference>
<dbReference type="RefSeq" id="NP_001319795.1">
    <property type="nucleotide sequence ID" value="NM_001339943.1"/>
</dbReference>
<dbReference type="RefSeq" id="NP_001326204.1">
    <property type="nucleotide sequence ID" value="NM_001339945.1"/>
</dbReference>
<dbReference type="RefSeq" id="NP_191452.2">
    <property type="nucleotide sequence ID" value="NM_115755.4"/>
</dbReference>
<dbReference type="BioGRID" id="10377">
    <property type="interactions" value="3"/>
</dbReference>
<dbReference type="FunCoup" id="Q8GXW6">
    <property type="interactions" value="1818"/>
</dbReference>
<dbReference type="IntAct" id="Q8GXW6">
    <property type="interactions" value="2"/>
</dbReference>
<dbReference type="PaxDb" id="3702-AT3G58930.1"/>
<dbReference type="ProteomicsDB" id="222516"/>
<dbReference type="EnsemblPlants" id="AT3G58930.1">
    <property type="protein sequence ID" value="AT3G58930.1"/>
    <property type="gene ID" value="AT3G58930"/>
</dbReference>
<dbReference type="EnsemblPlants" id="AT3G58930.3">
    <property type="protein sequence ID" value="AT3G58930.3"/>
    <property type="gene ID" value="AT3G58930"/>
</dbReference>
<dbReference type="EnsemblPlants" id="AT3G58930.5">
    <property type="protein sequence ID" value="AT3G58930.5"/>
    <property type="gene ID" value="AT3G58930"/>
</dbReference>
<dbReference type="GeneID" id="825062"/>
<dbReference type="Gramene" id="AT3G58930.1">
    <property type="protein sequence ID" value="AT3G58930.1"/>
    <property type="gene ID" value="AT3G58930"/>
</dbReference>
<dbReference type="Gramene" id="AT3G58930.3">
    <property type="protein sequence ID" value="AT3G58930.3"/>
    <property type="gene ID" value="AT3G58930"/>
</dbReference>
<dbReference type="Gramene" id="AT3G58930.5">
    <property type="protein sequence ID" value="AT3G58930.5"/>
    <property type="gene ID" value="AT3G58930"/>
</dbReference>
<dbReference type="KEGG" id="ath:AT3G58930"/>
<dbReference type="Araport" id="AT3G58930"/>
<dbReference type="TAIR" id="AT3G58930"/>
<dbReference type="HOGENOM" id="CLU_010721_7_1_1"/>
<dbReference type="InParanoid" id="Q8GXW6"/>
<dbReference type="OMA" id="HYETDKC"/>
<dbReference type="PhylomeDB" id="Q8GXW6"/>
<dbReference type="PRO" id="PR:Q8GXW6"/>
<dbReference type="Proteomes" id="UP000006548">
    <property type="component" value="Chromosome 3"/>
</dbReference>
<dbReference type="ExpressionAtlas" id="Q8GXW6">
    <property type="expression patterns" value="baseline and differential"/>
</dbReference>
<dbReference type="CDD" id="cd22160">
    <property type="entry name" value="F-box_AtFBL13-like"/>
    <property type="match status" value="1"/>
</dbReference>
<dbReference type="Gene3D" id="3.80.10.10">
    <property type="entry name" value="Ribonuclease Inhibitor"/>
    <property type="match status" value="1"/>
</dbReference>
<dbReference type="InterPro" id="IPR036047">
    <property type="entry name" value="F-box-like_dom_sf"/>
</dbReference>
<dbReference type="InterPro" id="IPR053781">
    <property type="entry name" value="F-box_AtFBL13-like"/>
</dbReference>
<dbReference type="InterPro" id="IPR001810">
    <property type="entry name" value="F-box_dom"/>
</dbReference>
<dbReference type="InterPro" id="IPR006566">
    <property type="entry name" value="FBD"/>
</dbReference>
<dbReference type="InterPro" id="IPR055294">
    <property type="entry name" value="FBL60-like"/>
</dbReference>
<dbReference type="InterPro" id="IPR032675">
    <property type="entry name" value="LRR_dom_sf"/>
</dbReference>
<dbReference type="InterPro" id="IPR055411">
    <property type="entry name" value="LRR_FXL15/At3g58940/PEG3-like"/>
</dbReference>
<dbReference type="PANTHER" id="PTHR31293">
    <property type="entry name" value="RNI-LIKE SUPERFAMILY PROTEIN"/>
    <property type="match status" value="1"/>
</dbReference>
<dbReference type="PANTHER" id="PTHR31293:SF16">
    <property type="entry name" value="RNI-LIKE SUPERFAMILY PROTEIN"/>
    <property type="match status" value="1"/>
</dbReference>
<dbReference type="Pfam" id="PF00646">
    <property type="entry name" value="F-box"/>
    <property type="match status" value="1"/>
</dbReference>
<dbReference type="Pfam" id="PF08387">
    <property type="entry name" value="FBD"/>
    <property type="match status" value="1"/>
</dbReference>
<dbReference type="Pfam" id="PF24758">
    <property type="entry name" value="LRR_At5g56370"/>
    <property type="match status" value="1"/>
</dbReference>
<dbReference type="SMART" id="SM00579">
    <property type="entry name" value="FBD"/>
    <property type="match status" value="1"/>
</dbReference>
<dbReference type="SUPFAM" id="SSF81383">
    <property type="entry name" value="F-box domain"/>
    <property type="match status" value="1"/>
</dbReference>
<dbReference type="SUPFAM" id="SSF52047">
    <property type="entry name" value="RNI-like"/>
    <property type="match status" value="1"/>
</dbReference>
<accession>Q8GXW6</accession>
<accession>A0A1I9LNK0</accession>
<accession>Q9LXQ9</accession>
<gene>
    <name type="ordered locus">At3g58930</name>
    <name type="ORF">T20N10.280</name>
</gene>
<keyword id="KW-0433">Leucine-rich repeat</keyword>
<keyword id="KW-1185">Reference proteome</keyword>
<keyword id="KW-0677">Repeat</keyword>
<proteinExistence type="evidence at transcript level"/>
<name>FBL59_ARATH</name>
<protein>
    <recommendedName>
        <fullName>F-box/LRR-repeat protein At3g58930</fullName>
    </recommendedName>
</protein>
<reference key="1">
    <citation type="journal article" date="2000" name="Nature">
        <title>Sequence and analysis of chromosome 3 of the plant Arabidopsis thaliana.</title>
        <authorList>
            <person name="Salanoubat M."/>
            <person name="Lemcke K."/>
            <person name="Rieger M."/>
            <person name="Ansorge W."/>
            <person name="Unseld M."/>
            <person name="Fartmann B."/>
            <person name="Valle G."/>
            <person name="Bloecker H."/>
            <person name="Perez-Alonso M."/>
            <person name="Obermaier B."/>
            <person name="Delseny M."/>
            <person name="Boutry M."/>
            <person name="Grivell L.A."/>
            <person name="Mache R."/>
            <person name="Puigdomenech P."/>
            <person name="De Simone V."/>
            <person name="Choisne N."/>
            <person name="Artiguenave F."/>
            <person name="Robert C."/>
            <person name="Brottier P."/>
            <person name="Wincker P."/>
            <person name="Cattolico L."/>
            <person name="Weissenbach J."/>
            <person name="Saurin W."/>
            <person name="Quetier F."/>
            <person name="Schaefer M."/>
            <person name="Mueller-Auer S."/>
            <person name="Gabel C."/>
            <person name="Fuchs M."/>
            <person name="Benes V."/>
            <person name="Wurmbach E."/>
            <person name="Drzonek H."/>
            <person name="Erfle H."/>
            <person name="Jordan N."/>
            <person name="Bangert S."/>
            <person name="Wiedelmann R."/>
            <person name="Kranz H."/>
            <person name="Voss H."/>
            <person name="Holland R."/>
            <person name="Brandt P."/>
            <person name="Nyakatura G."/>
            <person name="Vezzi A."/>
            <person name="D'Angelo M."/>
            <person name="Pallavicini A."/>
            <person name="Toppo S."/>
            <person name="Simionati B."/>
            <person name="Conrad A."/>
            <person name="Hornischer K."/>
            <person name="Kauer G."/>
            <person name="Loehnert T.-H."/>
            <person name="Nordsiek G."/>
            <person name="Reichelt J."/>
            <person name="Scharfe M."/>
            <person name="Schoen O."/>
            <person name="Bargues M."/>
            <person name="Terol J."/>
            <person name="Climent J."/>
            <person name="Navarro P."/>
            <person name="Collado C."/>
            <person name="Perez-Perez A."/>
            <person name="Ottenwaelder B."/>
            <person name="Duchemin D."/>
            <person name="Cooke R."/>
            <person name="Laudie M."/>
            <person name="Berger-Llauro C."/>
            <person name="Purnelle B."/>
            <person name="Masuy D."/>
            <person name="de Haan M."/>
            <person name="Maarse A.C."/>
            <person name="Alcaraz J.-P."/>
            <person name="Cottet A."/>
            <person name="Casacuberta E."/>
            <person name="Monfort A."/>
            <person name="Argiriou A."/>
            <person name="Flores M."/>
            <person name="Liguori R."/>
            <person name="Vitale D."/>
            <person name="Mannhaupt G."/>
            <person name="Haase D."/>
            <person name="Schoof H."/>
            <person name="Rudd S."/>
            <person name="Zaccaria P."/>
            <person name="Mewes H.-W."/>
            <person name="Mayer K.F.X."/>
            <person name="Kaul S."/>
            <person name="Town C.D."/>
            <person name="Koo H.L."/>
            <person name="Tallon L.J."/>
            <person name="Jenkins J."/>
            <person name="Rooney T."/>
            <person name="Rizzo M."/>
            <person name="Walts A."/>
            <person name="Utterback T."/>
            <person name="Fujii C.Y."/>
            <person name="Shea T.P."/>
            <person name="Creasy T.H."/>
            <person name="Haas B."/>
            <person name="Maiti R."/>
            <person name="Wu D."/>
            <person name="Peterson J."/>
            <person name="Van Aken S."/>
            <person name="Pai G."/>
            <person name="Militscher J."/>
            <person name="Sellers P."/>
            <person name="Gill J.E."/>
            <person name="Feldblyum T.V."/>
            <person name="Preuss D."/>
            <person name="Lin X."/>
            <person name="Nierman W.C."/>
            <person name="Salzberg S.L."/>
            <person name="White O."/>
            <person name="Venter J.C."/>
            <person name="Fraser C.M."/>
            <person name="Kaneko T."/>
            <person name="Nakamura Y."/>
            <person name="Sato S."/>
            <person name="Kato T."/>
            <person name="Asamizu E."/>
            <person name="Sasamoto S."/>
            <person name="Kimura T."/>
            <person name="Idesawa K."/>
            <person name="Kawashima K."/>
            <person name="Kishida Y."/>
            <person name="Kiyokawa C."/>
            <person name="Kohara M."/>
            <person name="Matsumoto M."/>
            <person name="Matsuno A."/>
            <person name="Muraki A."/>
            <person name="Nakayama S."/>
            <person name="Nakazaki N."/>
            <person name="Shinpo S."/>
            <person name="Takeuchi C."/>
            <person name="Wada T."/>
            <person name="Watanabe A."/>
            <person name="Yamada M."/>
            <person name="Yasuda M."/>
            <person name="Tabata S."/>
        </authorList>
    </citation>
    <scope>NUCLEOTIDE SEQUENCE [LARGE SCALE GENOMIC DNA]</scope>
    <source>
        <strain>cv. Columbia</strain>
    </source>
</reference>
<reference key="2">
    <citation type="journal article" date="2017" name="Plant J.">
        <title>Araport11: a complete reannotation of the Arabidopsis thaliana reference genome.</title>
        <authorList>
            <person name="Cheng C.Y."/>
            <person name="Krishnakumar V."/>
            <person name="Chan A.P."/>
            <person name="Thibaud-Nissen F."/>
            <person name="Schobel S."/>
            <person name="Town C.D."/>
        </authorList>
    </citation>
    <scope>GENOME REANNOTATION</scope>
    <source>
        <strain>cv. Columbia</strain>
    </source>
</reference>
<reference key="3">
    <citation type="journal article" date="2002" name="Science">
        <title>Functional annotation of a full-length Arabidopsis cDNA collection.</title>
        <authorList>
            <person name="Seki M."/>
            <person name="Narusaka M."/>
            <person name="Kamiya A."/>
            <person name="Ishida J."/>
            <person name="Satou M."/>
            <person name="Sakurai T."/>
            <person name="Nakajima M."/>
            <person name="Enju A."/>
            <person name="Akiyama K."/>
            <person name="Oono Y."/>
            <person name="Muramatsu M."/>
            <person name="Hayashizaki Y."/>
            <person name="Kawai J."/>
            <person name="Carninci P."/>
            <person name="Itoh M."/>
            <person name="Ishii Y."/>
            <person name="Arakawa T."/>
            <person name="Shibata K."/>
            <person name="Shinagawa A."/>
            <person name="Shinozaki K."/>
        </authorList>
    </citation>
    <scope>NUCLEOTIDE SEQUENCE [LARGE SCALE MRNA]</scope>
    <source>
        <strain>cv. Columbia</strain>
    </source>
</reference>
<reference key="4">
    <citation type="journal article" date="2003" name="Science">
        <title>Empirical analysis of transcriptional activity in the Arabidopsis genome.</title>
        <authorList>
            <person name="Yamada K."/>
            <person name="Lim J."/>
            <person name="Dale J.M."/>
            <person name="Chen H."/>
            <person name="Shinn P."/>
            <person name="Palm C.J."/>
            <person name="Southwick A.M."/>
            <person name="Wu H.C."/>
            <person name="Kim C.J."/>
            <person name="Nguyen M."/>
            <person name="Pham P.K."/>
            <person name="Cheuk R.F."/>
            <person name="Karlin-Newmann G."/>
            <person name="Liu S.X."/>
            <person name="Lam B."/>
            <person name="Sakano H."/>
            <person name="Wu T."/>
            <person name="Yu G."/>
            <person name="Miranda M."/>
            <person name="Quach H.L."/>
            <person name="Tripp M."/>
            <person name="Chang C.H."/>
            <person name="Lee J.M."/>
            <person name="Toriumi M.J."/>
            <person name="Chan M.M."/>
            <person name="Tang C.C."/>
            <person name="Onodera C.S."/>
            <person name="Deng J.M."/>
            <person name="Akiyama K."/>
            <person name="Ansari Y."/>
            <person name="Arakawa T."/>
            <person name="Banh J."/>
            <person name="Banno F."/>
            <person name="Bowser L."/>
            <person name="Brooks S.Y."/>
            <person name="Carninci P."/>
            <person name="Chao Q."/>
            <person name="Choy N."/>
            <person name="Enju A."/>
            <person name="Goldsmith A.D."/>
            <person name="Gurjal M."/>
            <person name="Hansen N.F."/>
            <person name="Hayashizaki Y."/>
            <person name="Johnson-Hopson C."/>
            <person name="Hsuan V.W."/>
            <person name="Iida K."/>
            <person name="Karnes M."/>
            <person name="Khan S."/>
            <person name="Koesema E."/>
            <person name="Ishida J."/>
            <person name="Jiang P.X."/>
            <person name="Jones T."/>
            <person name="Kawai J."/>
            <person name="Kamiya A."/>
            <person name="Meyers C."/>
            <person name="Nakajima M."/>
            <person name="Narusaka M."/>
            <person name="Seki M."/>
            <person name="Sakurai T."/>
            <person name="Satou M."/>
            <person name="Tamse R."/>
            <person name="Vaysberg M."/>
            <person name="Wallender E.K."/>
            <person name="Wong C."/>
            <person name="Yamamura Y."/>
            <person name="Yuan S."/>
            <person name="Shinozaki K."/>
            <person name="Davis R.W."/>
            <person name="Theologis A."/>
            <person name="Ecker J.R."/>
        </authorList>
    </citation>
    <scope>NUCLEOTIDE SEQUENCE [LARGE SCALE MRNA]</scope>
    <source>
        <strain>cv. Columbia</strain>
    </source>
</reference>
<sequence length="482" mass="55194">MDRVSNLPDGVRGHILSFLPAKHIALTSVLSKSWLNLWKLIPILDIDDSEFLHPEEGKAERLEIRQSFVDFVDRVLALQDDSPIDRFSLKCITGIHPDHVNRWICNVLQRGVSDLDLFIDFSYEDTQEDEDMLPQEMFVSKTLVKLKIRNDRCVDWWCGKGGTSLPMLKSLYIDSDLILWGKMKRFLSSFPVLEELRMASMEWKESHETVSSASLRKLSILGTGCEDYVNPKSISFDTPSLLYLNYSDLVAEDYPLVNMGKLLEARINLIVKDDQIKRVREPNNDLLQDDAGNVVLQFGNVVKLMNGIQNIQILYLTADTLEVLSLCCESMPVFNNLKTLGIKSEEGRGWQAVPALLRNCPHLEYLIIEGLLHNVTDKCGDACDCISREDKGRSLASCPVKKVEIQGFRGTMREINMIGHFLRSFKCLKEMGIFPEEEGPTNFENPGAFEYVEKILKLYNEISNCDVYFLVWGYMRRKWTTQ</sequence>
<feature type="chain" id="PRO_0000281960" description="F-box/LRR-repeat protein At3g58930">
    <location>
        <begin position="1"/>
        <end position="482"/>
    </location>
</feature>
<feature type="domain" description="F-box">
    <location>
        <begin position="1"/>
        <end position="47"/>
    </location>
</feature>
<feature type="repeat" description="LRR 1">
    <location>
        <begin position="122"/>
        <end position="150"/>
    </location>
</feature>
<feature type="repeat" description="LRR 2">
    <location>
        <begin position="175"/>
        <end position="200"/>
    </location>
</feature>
<feature type="repeat" description="LRR 3">
    <location>
        <begin position="222"/>
        <end position="248"/>
    </location>
</feature>
<feature type="repeat" description="LRR 4">
    <location>
        <begin position="313"/>
        <end position="344"/>
    </location>
</feature>
<feature type="repeat" description="LRR 5">
    <location>
        <begin position="345"/>
        <end position="370"/>
    </location>
</feature>